<dbReference type="EC" id="2.1.1.237"/>
<dbReference type="EMBL" id="D16097">
    <property type="protein sequence ID" value="BAA03670.1"/>
    <property type="molecule type" value="Genomic_DNA"/>
</dbReference>
<dbReference type="EMBL" id="AB089954">
    <property type="protein sequence ID" value="BAC57022.1"/>
    <property type="status" value="ALT_FRAME"/>
    <property type="molecule type" value="Genomic_DNA"/>
</dbReference>
<dbReference type="EMBL" id="D16098">
    <property type="protein sequence ID" value="BAA03673.1"/>
    <property type="molecule type" value="Genomic_DNA"/>
</dbReference>
<dbReference type="PIR" id="S51595">
    <property type="entry name" value="S51595"/>
</dbReference>
<dbReference type="PDB" id="4X7U">
    <property type="method" value="X-ray"/>
    <property type="resolution" value="1.65 A"/>
    <property type="chains" value="A/B=1-254"/>
</dbReference>
<dbReference type="PDB" id="4X7V">
    <property type="method" value="X-ray"/>
    <property type="resolution" value="1.45 A"/>
    <property type="chains" value="A/B=1-254"/>
</dbReference>
<dbReference type="PDB" id="4X7W">
    <property type="method" value="X-ray"/>
    <property type="resolution" value="1.75 A"/>
    <property type="chains" value="A/B=1-254"/>
</dbReference>
<dbReference type="PDB" id="4X7X">
    <property type="method" value="X-ray"/>
    <property type="resolution" value="1.75 A"/>
    <property type="chains" value="A/B=1-254"/>
</dbReference>
<dbReference type="PDB" id="4X7Y">
    <property type="method" value="X-ray"/>
    <property type="resolution" value="1.40 A"/>
    <property type="chains" value="A/B=1-254"/>
</dbReference>
<dbReference type="PDB" id="4X7Z">
    <property type="method" value="X-ray"/>
    <property type="resolution" value="1.44 A"/>
    <property type="chains" value="A/B=1-254"/>
</dbReference>
<dbReference type="PDB" id="4X81">
    <property type="method" value="X-ray"/>
    <property type="resolution" value="1.59 A"/>
    <property type="chains" value="A/B=1-254"/>
</dbReference>
<dbReference type="PDB" id="4XVY">
    <property type="method" value="X-ray"/>
    <property type="resolution" value="2.42 A"/>
    <property type="chains" value="A/B=1-254"/>
</dbReference>
<dbReference type="PDB" id="4XVZ">
    <property type="method" value="X-ray"/>
    <property type="resolution" value="2.49 A"/>
    <property type="chains" value="A/B/C/D=2-254"/>
</dbReference>
<dbReference type="PDBsum" id="4X7U"/>
<dbReference type="PDBsum" id="4X7V"/>
<dbReference type="PDBsum" id="4X7W"/>
<dbReference type="PDBsum" id="4X7X"/>
<dbReference type="PDBsum" id="4X7Y"/>
<dbReference type="PDBsum" id="4X7Z"/>
<dbReference type="PDBsum" id="4X81"/>
<dbReference type="PDBsum" id="4XVY"/>
<dbReference type="PDBsum" id="4XVZ"/>
<dbReference type="SMR" id="Q49492"/>
<dbReference type="KEGG" id="ag:BAA03670"/>
<dbReference type="BioCyc" id="MetaCyc:MONOMER-18368"/>
<dbReference type="BRENDA" id="2.1.1.237">
    <property type="organism ID" value="7845"/>
</dbReference>
<dbReference type="UniPathway" id="UPA01019"/>
<dbReference type="EvolutionaryTrace" id="Q49492"/>
<dbReference type="GO" id="GO:0000287">
    <property type="term" value="F:magnesium ion binding"/>
    <property type="evidence" value="ECO:0000314"/>
    <property type="project" value="UniProtKB"/>
</dbReference>
<dbReference type="GO" id="GO:0008171">
    <property type="term" value="F:O-methyltransferase activity"/>
    <property type="evidence" value="ECO:0000314"/>
    <property type="project" value="UniProtKB"/>
</dbReference>
<dbReference type="GO" id="GO:0036094">
    <property type="term" value="F:small molecule binding"/>
    <property type="evidence" value="ECO:0000269"/>
    <property type="project" value="DisProt"/>
</dbReference>
<dbReference type="GO" id="GO:0017000">
    <property type="term" value="P:antibiotic biosynthetic process"/>
    <property type="evidence" value="ECO:0000314"/>
    <property type="project" value="UniProtKB"/>
</dbReference>
<dbReference type="GO" id="GO:0032259">
    <property type="term" value="P:methylation"/>
    <property type="evidence" value="ECO:0000314"/>
    <property type="project" value="UniProtKB"/>
</dbReference>
<dbReference type="DisProt" id="DP01356"/>
<dbReference type="FunFam" id="3.40.50.150:FF:000331">
    <property type="entry name" value="Macrocin O-methyltransferase"/>
    <property type="match status" value="1"/>
</dbReference>
<dbReference type="Gene3D" id="3.40.50.150">
    <property type="entry name" value="Vaccinia Virus protein VP39"/>
    <property type="match status" value="1"/>
</dbReference>
<dbReference type="InterPro" id="IPR029063">
    <property type="entry name" value="SAM-dependent_MTases_sf"/>
</dbReference>
<dbReference type="InterPro" id="IPR008884">
    <property type="entry name" value="TylF_MeTrfase"/>
</dbReference>
<dbReference type="PANTHER" id="PTHR40036">
    <property type="entry name" value="MACROCIN O-METHYLTRANSFERASE"/>
    <property type="match status" value="1"/>
</dbReference>
<dbReference type="PANTHER" id="PTHR40036:SF1">
    <property type="entry name" value="MACROCIN O-METHYLTRANSFERASE"/>
    <property type="match status" value="1"/>
</dbReference>
<dbReference type="Pfam" id="PF05711">
    <property type="entry name" value="TylF"/>
    <property type="match status" value="1"/>
</dbReference>
<dbReference type="SUPFAM" id="SSF53335">
    <property type="entry name" value="S-adenosyl-L-methionine-dependent methyltransferases"/>
    <property type="match status" value="1"/>
</dbReference>
<sequence length="254" mass="28612">MSPSTGVELYLDLLKRTVSNFIYQDATHVAGLITEAAFVEEARESGEDYPTVAHTMIGMKRLNNLQHCVESALRDGVPGDVLETGVWRGGACIFARGILKAYDVRDRTVWVADSFQGFPKITDDDHPMDAEMNLHQYNEAVDLPTSLATVQRNFSRYGLLDDQVRFLPGWFKDTMPTAPFERLAVLRMDGDSYGATMDVLTHAYPRLSPGGFAIIDDYCIPACREAVHEYRDRHGISDEIVEIDRQGVYWRRSA</sequence>
<proteinExistence type="evidence at protein level"/>
<organism>
    <name type="scientific">Micromonospora griseorubida</name>
    <dbReference type="NCBI Taxonomy" id="28040"/>
    <lineage>
        <taxon>Bacteria</taxon>
        <taxon>Bacillati</taxon>
        <taxon>Actinomycetota</taxon>
        <taxon>Actinomycetes</taxon>
        <taxon>Micromonosporales</taxon>
        <taxon>Micromonosporaceae</taxon>
        <taxon>Micromonospora</taxon>
    </lineage>
</organism>
<reference key="1">
    <citation type="journal article" date="1994" name="Gene">
        <title>A gene encoding mycinamicin III O-methyltransferase from Micromonospora griseorubida.</title>
        <authorList>
            <person name="Inouye M."/>
            <person name="Suzuki H."/>
            <person name="Takada Y."/>
            <person name="Muto N."/>
            <person name="Horinouchi S."/>
            <person name="Beppu T."/>
        </authorList>
    </citation>
    <scope>NUCLEOTIDE SEQUENCE [GENOMIC DNA]</scope>
    <scope>FUNCTION</scope>
    <source>
        <strain>A11725</strain>
    </source>
</reference>
<reference key="2">
    <citation type="journal article" date="2003" name="FEMS Microbiol. Lett.">
        <title>Organization of the biosynthetic gene cluster for the polyketide macrolide mycinamicin in Micromonospora griseorubida.</title>
        <authorList>
            <person name="Anzai Y."/>
            <person name="Saito N."/>
            <person name="Tanaka M."/>
            <person name="Kinoshita K."/>
            <person name="Koyama Y."/>
            <person name="Kato F."/>
        </authorList>
    </citation>
    <scope>NUCLEOTIDE SEQUENCE [GENOMIC DNA]</scope>
</reference>
<reference key="3">
    <citation type="journal article" date="1994" name="Mol. Gen. Genet.">
        <title>Characterization and expression of a P-450-like mycinamicin biosynthesis gene using a novel Micromonospora-Escherichia coli shuttle cosmid vector.</title>
        <authorList>
            <person name="Inouye M."/>
            <person name="Takada Y."/>
            <person name="Muto N."/>
            <person name="Horinouchi S."/>
            <person name="Beppu T."/>
        </authorList>
    </citation>
    <scope>NUCLEOTIDE SEQUENCE [GENOMIC DNA] OF 33-254</scope>
    <scope>FUNCTION</scope>
    <source>
        <strain>A11725</strain>
    </source>
</reference>
<reference key="4">
    <citation type="journal article" date="2009" name="ChemBioChem">
        <title>Functional analysis of MycE and MycF, two O-methyltransferases involved in the biosynthesis of mycinamicin macrolide antibiotics.</title>
        <authorList>
            <person name="Li S."/>
            <person name="Anzai Y."/>
            <person name="Kinoshita K."/>
            <person name="Kato F."/>
            <person name="Sherman D.H."/>
        </authorList>
    </citation>
    <scope>FUNCTION</scope>
    <scope>CATALYTIC ACTIVITY</scope>
    <scope>PATHWAY</scope>
    <scope>COFACTOR</scope>
    <source>
        <strain>A11725</strain>
    </source>
</reference>
<reference key="5">
    <citation type="journal article" date="2010" name="FEMS Microbiol. Lett.">
        <title>Gene targeting for O-methyltransferase genes, mycE and mycF, on the chromosome of Micromonospora griseorubida producing mycinamicin with a disruption cassette containing the bacteriophage phi C31 attB attachment site.</title>
        <authorList>
            <person name="Tsukada S."/>
            <person name="Anzai Y."/>
            <person name="Li S."/>
            <person name="Kinoshita K."/>
            <person name="Sherman D.H."/>
            <person name="Kato F."/>
        </authorList>
    </citation>
    <scope>DISRUPTION PHENOTYPE</scope>
    <source>
        <strain>A11725</strain>
    </source>
</reference>
<comment type="function">
    <text evidence="3 5 6">O-methyltransferase that catalyzes the conversion of mycinamicin III to mycinamicin IV in the biosynthesis of mycinamicin, a 16-membered macrolide antibiotic.</text>
</comment>
<comment type="catalytic activity">
    <reaction evidence="3">
        <text>mycinamicin III + S-adenosyl-L-methionine = mycinamicin IV + S-adenosyl-L-homocysteine + H(+)</text>
        <dbReference type="Rhea" id="RHEA:31639"/>
        <dbReference type="ChEBI" id="CHEBI:15378"/>
        <dbReference type="ChEBI" id="CHEBI:57856"/>
        <dbReference type="ChEBI" id="CHEBI:59789"/>
        <dbReference type="ChEBI" id="CHEBI:63308"/>
        <dbReference type="ChEBI" id="CHEBI:63310"/>
        <dbReference type="EC" id="2.1.1.237"/>
    </reaction>
</comment>
<comment type="cofactor">
    <cofactor evidence="3">
        <name>Mg(2+)</name>
        <dbReference type="ChEBI" id="CHEBI:18420"/>
    </cofactor>
</comment>
<comment type="pathway">
    <text evidence="3">Antibiotic biosynthesis; mycinamicin biosynthesis.</text>
</comment>
<comment type="disruption phenotype">
    <text evidence="4">No production of mycinamicin II and accumulation of mycinamicin III.</text>
</comment>
<comment type="similarity">
    <text evidence="7">Belongs to the methyltransferase TylF/MycF family.</text>
</comment>
<comment type="sequence caution" evidence="7">
    <conflict type="frameshift">
        <sequence resource="EMBL-CDS" id="BAC57022"/>
    </conflict>
</comment>
<keyword id="KW-0002">3D-structure</keyword>
<keyword id="KW-0045">Antibiotic biosynthesis</keyword>
<keyword id="KW-0460">Magnesium</keyword>
<keyword id="KW-0479">Metal-binding</keyword>
<keyword id="KW-0489">Methyltransferase</keyword>
<keyword id="KW-0949">S-adenosyl-L-methionine</keyword>
<keyword id="KW-0808">Transferase</keyword>
<protein>
    <recommendedName>
        <fullName>Mycinamicin III 3''-O-methyltransferase</fullName>
        <ecNumber>2.1.1.237</ecNumber>
    </recommendedName>
    <alternativeName>
        <fullName>Mycinamicin biosynthesis protein F</fullName>
    </alternativeName>
</protein>
<name>MYCF_MICGR</name>
<evidence type="ECO:0000250" key="1">
    <source>
        <dbReference type="UniProtKB" id="Q9L9F2"/>
    </source>
</evidence>
<evidence type="ECO:0000255" key="2"/>
<evidence type="ECO:0000269" key="3">
    <source>
    </source>
</evidence>
<evidence type="ECO:0000269" key="4">
    <source>
    </source>
</evidence>
<evidence type="ECO:0000269" key="5">
    <source>
    </source>
</evidence>
<evidence type="ECO:0000269" key="6">
    <source>
    </source>
</evidence>
<evidence type="ECO:0000305" key="7"/>
<evidence type="ECO:0007829" key="8">
    <source>
        <dbReference type="PDB" id="4X7Y"/>
    </source>
</evidence>
<evidence type="ECO:0007829" key="9">
    <source>
        <dbReference type="PDB" id="4XVY"/>
    </source>
</evidence>
<evidence type="ECO:0007829" key="10">
    <source>
        <dbReference type="PDB" id="4XVZ"/>
    </source>
</evidence>
<gene>
    <name type="primary">mycF</name>
</gene>
<feature type="chain" id="PRO_0000418456" description="Mycinamicin III 3''-O-methyltransferase">
    <location>
        <begin position="1"/>
        <end position="254"/>
    </location>
</feature>
<feature type="binding site" evidence="1">
    <location>
        <begin position="55"/>
        <end position="56"/>
    </location>
    <ligand>
        <name>S-adenosyl-L-methionine</name>
        <dbReference type="ChEBI" id="CHEBI:59789"/>
    </ligand>
</feature>
<feature type="binding site" evidence="1">
    <location>
        <begin position="83"/>
        <end position="87"/>
    </location>
    <ligand>
        <name>S-adenosyl-L-methionine</name>
        <dbReference type="ChEBI" id="CHEBI:59789"/>
    </ligand>
</feature>
<feature type="binding site" evidence="1">
    <location>
        <begin position="113"/>
        <end position="117"/>
    </location>
    <ligand>
        <name>S-adenosyl-L-methionine</name>
        <dbReference type="ChEBI" id="CHEBI:59789"/>
    </ligand>
</feature>
<feature type="binding site" evidence="1">
    <location>
        <position position="171"/>
    </location>
    <ligand>
        <name>S-adenosyl-L-methionine</name>
        <dbReference type="ChEBI" id="CHEBI:59789"/>
    </ligand>
</feature>
<feature type="binding site" evidence="1">
    <location>
        <begin position="189"/>
        <end position="190"/>
    </location>
    <ligand>
        <name>S-adenosyl-L-methionine</name>
        <dbReference type="ChEBI" id="CHEBI:59789"/>
    </ligand>
</feature>
<feature type="binding site" evidence="2">
    <location>
        <position position="189"/>
    </location>
    <ligand>
        <name>Mg(2+)</name>
        <dbReference type="ChEBI" id="CHEBI:18420"/>
    </ligand>
</feature>
<feature type="binding site" evidence="2">
    <location>
        <position position="216"/>
    </location>
    <ligand>
        <name>Mg(2+)</name>
        <dbReference type="ChEBI" id="CHEBI:18420"/>
    </ligand>
</feature>
<feature type="binding site" evidence="2">
    <location>
        <position position="217"/>
    </location>
    <ligand>
        <name>Mg(2+)</name>
        <dbReference type="ChEBI" id="CHEBI:18420"/>
    </ligand>
</feature>
<feature type="helix" evidence="8">
    <location>
        <begin position="6"/>
        <end position="18"/>
    </location>
</feature>
<feature type="turn" evidence="8">
    <location>
        <begin position="19"/>
        <end position="23"/>
    </location>
</feature>
<feature type="helix" evidence="8">
    <location>
        <begin position="40"/>
        <end position="44"/>
    </location>
</feature>
<feature type="strand" evidence="8">
    <location>
        <begin position="50"/>
        <end position="52"/>
    </location>
</feature>
<feature type="helix" evidence="8">
    <location>
        <begin position="58"/>
        <end position="75"/>
    </location>
</feature>
<feature type="strand" evidence="8">
    <location>
        <begin position="80"/>
        <end position="84"/>
    </location>
</feature>
<feature type="strand" evidence="10">
    <location>
        <begin position="87"/>
        <end position="89"/>
    </location>
</feature>
<feature type="helix" evidence="8">
    <location>
        <begin position="90"/>
        <end position="101"/>
    </location>
</feature>
<feature type="strand" evidence="8">
    <location>
        <begin position="109"/>
        <end position="113"/>
    </location>
</feature>
<feature type="strand" evidence="9">
    <location>
        <begin position="123"/>
        <end position="125"/>
    </location>
</feature>
<feature type="helix" evidence="8">
    <location>
        <begin position="127"/>
        <end position="132"/>
    </location>
</feature>
<feature type="helix" evidence="8">
    <location>
        <begin position="134"/>
        <end position="137"/>
    </location>
</feature>
<feature type="turn" evidence="8">
    <location>
        <begin position="138"/>
        <end position="142"/>
    </location>
</feature>
<feature type="helix" evidence="8">
    <location>
        <begin position="147"/>
        <end position="156"/>
    </location>
</feature>
<feature type="strand" evidence="8">
    <location>
        <begin position="164"/>
        <end position="169"/>
    </location>
</feature>
<feature type="helix" evidence="8">
    <location>
        <begin position="171"/>
        <end position="174"/>
    </location>
</feature>
<feature type="strand" evidence="8">
    <location>
        <begin position="183"/>
        <end position="188"/>
    </location>
</feature>
<feature type="helix" evidence="8">
    <location>
        <begin position="193"/>
        <end position="203"/>
    </location>
</feature>
<feature type="helix" evidence="8">
    <location>
        <begin position="204"/>
        <end position="206"/>
    </location>
</feature>
<feature type="strand" evidence="8">
    <location>
        <begin position="207"/>
        <end position="215"/>
    </location>
</feature>
<feature type="turn" evidence="8">
    <location>
        <begin position="216"/>
        <end position="219"/>
    </location>
</feature>
<feature type="helix" evidence="8">
    <location>
        <begin position="221"/>
        <end position="234"/>
    </location>
</feature>
<feature type="strand" evidence="8">
    <location>
        <begin position="244"/>
        <end position="246"/>
    </location>
</feature>
<feature type="strand" evidence="8">
    <location>
        <begin position="248"/>
        <end position="251"/>
    </location>
</feature>
<accession>Q49492</accession>
<accession>Q49493</accession>
<accession>Q79F70</accession>
<accession>Q83WF6</accession>